<proteinExistence type="inferred from homology"/>
<evidence type="ECO:0000255" key="1">
    <source>
        <dbReference type="HAMAP-Rule" id="MF_00849"/>
    </source>
</evidence>
<evidence type="ECO:0000269" key="2">
    <source>
    </source>
</evidence>
<evidence type="ECO:0000303" key="3">
    <source>
    </source>
</evidence>
<evidence type="ECO:0000305" key="4"/>
<accession>P0A3B1</accession>
<accession>Q9EXN7</accession>
<comment type="function">
    <text evidence="1">A 50S ribosomal subunit assembly protein with GTPase activity, required for 50S subunit assembly at low temperatures, may also play a role in translation. Binds GTP and analogs. Binds the 70S ribosome between the 30S and 50S subunits, in a similar position as ribosome-bound EF-G; it contacts a number of ribosomal proteins, both rRNAs and the A-site tRNA.</text>
</comment>
<comment type="catalytic activity">
    <reaction evidence="1">
        <text>GTP + H2O = GDP + phosphate + H(+)</text>
        <dbReference type="Rhea" id="RHEA:19669"/>
        <dbReference type="ChEBI" id="CHEBI:15377"/>
        <dbReference type="ChEBI" id="CHEBI:15378"/>
        <dbReference type="ChEBI" id="CHEBI:37565"/>
        <dbReference type="ChEBI" id="CHEBI:43474"/>
        <dbReference type="ChEBI" id="CHEBI:58189"/>
    </reaction>
</comment>
<comment type="subunit">
    <text evidence="1">Monomer.</text>
</comment>
<comment type="subcellular location">
    <subcellularLocation>
        <location evidence="1">Cytoplasm</location>
    </subcellularLocation>
    <text evidence="1">Binds to ribosomes.</text>
</comment>
<comment type="disruption phenotype">
    <text evidence="2">Wild-type growth at 37 degrees Celsius, at 18 degrees grows much more slowly, reaches stationary phase at a lower cell density, seriously decreased amounts of 70S ribosomes. A double bipA-uup deletion has a more severe growth phenotype, low 70S ribosomes but higher amounts of 50S ribosomal subunits than the single bipA deletion. The growth phenotype is suppressed by low ectopic expression of Uup.</text>
</comment>
<comment type="similarity">
    <text evidence="1">Belongs to the TRAFAC class translation factor GTPase superfamily. Classic translation factor GTPase family. BipA subfamily.</text>
</comment>
<name>BIPA_ECOL6</name>
<sequence>MIEKLRNIAIIAHVDHGKTTLVDKLLQQSGTFDSRAETQERVMDSNDLEKERGITILAKNTAIKWNDYRINIVDTPGHADFGGEVERVMSMVDSVLLVVDAFDGPMPQTRFVTKKAFAYGLKPIVVINKVDRPGARPDWVVDQVFDLFVNLDATDEQLDFPIVYASALNGIAGLDHEDMAEDMTPLYQAIVDHVPAPDVDLDGPFQMQISQLDYNSYVGVIGIGRIKRGKVKPNQQVTIIDSEGKTRNAKVGKVLGHLGLERIETDLAEAGDIVAITGLGELNISDTVCDTQNVEALPALSVDEPTVSMFFCVNTSPFCGKEGKFVTSRQILDRLNKELVHNVALRVEETEDADAFRVSGRGELHLSVLIENMRREGFELAVSRPKVIFREIDGRKQEPYENVTLDVEEQHQGSVMQALGERKGDLKNMNPDGKGRVRLDYVIPSRGLIGFRSEFMTMTSGTGLLYSTFSHYDDVRPGEVGQRQNGVLISNGQGKAVAFALFGLQDRGKLFLGHGAEVYEGQIIGIHSRSNDLTVNCLTGKKLTNMRASGTDEAVVLVPPIRMTLEQALEFIDDDELVEVTPTSIRIRKRHLTENDRRRANRAPKDD</sequence>
<reference key="1">
    <citation type="journal article" date="2002" name="Proc. Natl. Acad. Sci. U.S.A.">
        <title>Extensive mosaic structure revealed by the complete genome sequence of uropathogenic Escherichia coli.</title>
        <authorList>
            <person name="Welch R.A."/>
            <person name="Burland V."/>
            <person name="Plunkett G. III"/>
            <person name="Redford P."/>
            <person name="Roesch P."/>
            <person name="Rasko D."/>
            <person name="Buckles E.L."/>
            <person name="Liou S.-R."/>
            <person name="Boutin A."/>
            <person name="Hackett J."/>
            <person name="Stroud D."/>
            <person name="Mayhew G.F."/>
            <person name="Rose D.J."/>
            <person name="Zhou S."/>
            <person name="Schwartz D.C."/>
            <person name="Perna N.T."/>
            <person name="Mobley H.L.T."/>
            <person name="Donnenberg M.S."/>
            <person name="Blattner F.R."/>
        </authorList>
    </citation>
    <scope>NUCLEOTIDE SEQUENCE [LARGE SCALE GENOMIC DNA]</scope>
    <source>
        <strain>CFT073 / ATCC 700928 / UPEC</strain>
    </source>
</reference>
<reference key="2">
    <citation type="journal article" date="2019" name="J. Mol. Biol.">
        <title>ABCF ATPases involved in protein synthesis, ribosome assembly and antibiotic resistance: structural and functional diversification across the tree of life.</title>
        <authorList>
            <person name="Murina V."/>
            <person name="Kasari M."/>
            <person name="Takada H."/>
            <person name="Hinnu M."/>
            <person name="Saha C.K."/>
            <person name="Grimshaw J.W."/>
            <person name="Seki T."/>
            <person name="Reith M."/>
            <person name="Putrins M."/>
            <person name="Tenson T."/>
            <person name="Strahl H."/>
            <person name="Hauryliuk V."/>
            <person name="Atkinson G.C."/>
        </authorList>
    </citation>
    <scope>DISRUPTION PHENOTYPE</scope>
    <source>
        <strain>CFT073 / ATCC 700928 / UPEC</strain>
    </source>
</reference>
<keyword id="KW-0963">Cytoplasm</keyword>
<keyword id="KW-0342">GTP-binding</keyword>
<keyword id="KW-0378">Hydrolase</keyword>
<keyword id="KW-0547">Nucleotide-binding</keyword>
<keyword id="KW-1185">Reference proteome</keyword>
<keyword id="KW-0690">Ribosome biogenesis</keyword>
<keyword id="KW-0694">RNA-binding</keyword>
<keyword id="KW-0699">rRNA-binding</keyword>
<keyword id="KW-0820">tRNA-binding</keyword>
<dbReference type="EC" id="3.6.5.-" evidence="1"/>
<dbReference type="EMBL" id="AE014075">
    <property type="protein sequence ID" value="AAN83249.1"/>
    <property type="molecule type" value="Genomic_DNA"/>
</dbReference>
<dbReference type="RefSeq" id="WP_000570668.1">
    <property type="nucleotide sequence ID" value="NZ_CP051263.1"/>
</dbReference>
<dbReference type="SMR" id="P0A3B1"/>
<dbReference type="STRING" id="199310.c4820"/>
<dbReference type="GeneID" id="93778065"/>
<dbReference type="KEGG" id="ecc:c4820"/>
<dbReference type="eggNOG" id="COG1217">
    <property type="taxonomic scope" value="Bacteria"/>
</dbReference>
<dbReference type="HOGENOM" id="CLU_017016_4_0_6"/>
<dbReference type="BioCyc" id="ECOL199310:C4820-MONOMER"/>
<dbReference type="Proteomes" id="UP000001410">
    <property type="component" value="Chromosome"/>
</dbReference>
<dbReference type="GO" id="GO:0005829">
    <property type="term" value="C:cytosol"/>
    <property type="evidence" value="ECO:0007669"/>
    <property type="project" value="TreeGrafter"/>
</dbReference>
<dbReference type="GO" id="GO:1990904">
    <property type="term" value="C:ribonucleoprotein complex"/>
    <property type="evidence" value="ECO:0007669"/>
    <property type="project" value="TreeGrafter"/>
</dbReference>
<dbReference type="GO" id="GO:0005525">
    <property type="term" value="F:GTP binding"/>
    <property type="evidence" value="ECO:0007669"/>
    <property type="project" value="UniProtKB-UniRule"/>
</dbReference>
<dbReference type="GO" id="GO:0003924">
    <property type="term" value="F:GTPase activity"/>
    <property type="evidence" value="ECO:0007669"/>
    <property type="project" value="UniProtKB-UniRule"/>
</dbReference>
<dbReference type="GO" id="GO:0097216">
    <property type="term" value="F:guanosine tetraphosphate binding"/>
    <property type="evidence" value="ECO:0007669"/>
    <property type="project" value="UniProtKB-ARBA"/>
</dbReference>
<dbReference type="GO" id="GO:0043022">
    <property type="term" value="F:ribosome binding"/>
    <property type="evidence" value="ECO:0007669"/>
    <property type="project" value="UniProtKB-UniRule"/>
</dbReference>
<dbReference type="GO" id="GO:0019843">
    <property type="term" value="F:rRNA binding"/>
    <property type="evidence" value="ECO:0007669"/>
    <property type="project" value="UniProtKB-KW"/>
</dbReference>
<dbReference type="GO" id="GO:0000049">
    <property type="term" value="F:tRNA binding"/>
    <property type="evidence" value="ECO:0007669"/>
    <property type="project" value="UniProtKB-KW"/>
</dbReference>
<dbReference type="GO" id="GO:0000027">
    <property type="term" value="P:ribosomal large subunit assembly"/>
    <property type="evidence" value="ECO:0007669"/>
    <property type="project" value="UniProtKB-UniRule"/>
</dbReference>
<dbReference type="CDD" id="cd16263">
    <property type="entry name" value="BipA_III"/>
    <property type="match status" value="1"/>
</dbReference>
<dbReference type="CDD" id="cd03710">
    <property type="entry name" value="BipA_TypA_C"/>
    <property type="match status" value="1"/>
</dbReference>
<dbReference type="CDD" id="cd03691">
    <property type="entry name" value="BipA_TypA_II"/>
    <property type="match status" value="1"/>
</dbReference>
<dbReference type="CDD" id="cd01891">
    <property type="entry name" value="TypA_BipA"/>
    <property type="match status" value="1"/>
</dbReference>
<dbReference type="FunFam" id="2.40.30.10:FF:000016">
    <property type="entry name" value="GTP-binding protein TypA"/>
    <property type="match status" value="1"/>
</dbReference>
<dbReference type="FunFam" id="2.40.50.250:FF:000001">
    <property type="entry name" value="GTP-binding protein TypA"/>
    <property type="match status" value="1"/>
</dbReference>
<dbReference type="FunFam" id="3.30.70.240:FF:000002">
    <property type="entry name" value="GTP-binding protein TypA"/>
    <property type="match status" value="1"/>
</dbReference>
<dbReference type="FunFam" id="3.30.70.870:FF:000003">
    <property type="entry name" value="GTP-binding protein TypA"/>
    <property type="match status" value="1"/>
</dbReference>
<dbReference type="FunFam" id="3.40.50.300:FF:000055">
    <property type="entry name" value="GTP-binding protein TypA"/>
    <property type="match status" value="1"/>
</dbReference>
<dbReference type="Gene3D" id="3.30.70.240">
    <property type="match status" value="1"/>
</dbReference>
<dbReference type="Gene3D" id="2.40.50.250">
    <property type="entry name" value="bipa protein"/>
    <property type="match status" value="1"/>
</dbReference>
<dbReference type="Gene3D" id="3.30.70.870">
    <property type="entry name" value="Elongation Factor G (Translational Gtpase), domain 3"/>
    <property type="match status" value="1"/>
</dbReference>
<dbReference type="Gene3D" id="3.40.50.300">
    <property type="entry name" value="P-loop containing nucleotide triphosphate hydrolases"/>
    <property type="match status" value="1"/>
</dbReference>
<dbReference type="Gene3D" id="2.40.30.10">
    <property type="entry name" value="Translation factors"/>
    <property type="match status" value="1"/>
</dbReference>
<dbReference type="HAMAP" id="MF_00849">
    <property type="entry name" value="BipA"/>
    <property type="match status" value="1"/>
</dbReference>
<dbReference type="InterPro" id="IPR006298">
    <property type="entry name" value="BipA"/>
</dbReference>
<dbReference type="InterPro" id="IPR048876">
    <property type="entry name" value="BipA_C"/>
</dbReference>
<dbReference type="InterPro" id="IPR047041">
    <property type="entry name" value="BipA_GTP-bd_dom"/>
</dbReference>
<dbReference type="InterPro" id="IPR047042">
    <property type="entry name" value="BipA_II"/>
</dbReference>
<dbReference type="InterPro" id="IPR047043">
    <property type="entry name" value="BipA_III"/>
</dbReference>
<dbReference type="InterPro" id="IPR035651">
    <property type="entry name" value="BipA_V"/>
</dbReference>
<dbReference type="InterPro" id="IPR035647">
    <property type="entry name" value="EFG_III/V"/>
</dbReference>
<dbReference type="InterPro" id="IPR000640">
    <property type="entry name" value="EFG_V-like"/>
</dbReference>
<dbReference type="InterPro" id="IPR004161">
    <property type="entry name" value="EFTu-like_2"/>
</dbReference>
<dbReference type="InterPro" id="IPR031157">
    <property type="entry name" value="G_TR_CS"/>
</dbReference>
<dbReference type="InterPro" id="IPR027417">
    <property type="entry name" value="P-loop_NTPase"/>
</dbReference>
<dbReference type="InterPro" id="IPR005225">
    <property type="entry name" value="Small_GTP-bd"/>
</dbReference>
<dbReference type="InterPro" id="IPR000795">
    <property type="entry name" value="T_Tr_GTP-bd_dom"/>
</dbReference>
<dbReference type="InterPro" id="IPR009000">
    <property type="entry name" value="Transl_B-barrel_sf"/>
</dbReference>
<dbReference type="InterPro" id="IPR042116">
    <property type="entry name" value="TypA/BipA_C"/>
</dbReference>
<dbReference type="NCBIfam" id="NF007583">
    <property type="entry name" value="PRK10218.1"/>
    <property type="match status" value="1"/>
</dbReference>
<dbReference type="NCBIfam" id="TIGR00231">
    <property type="entry name" value="small_GTP"/>
    <property type="match status" value="1"/>
</dbReference>
<dbReference type="NCBIfam" id="TIGR01394">
    <property type="entry name" value="TypA_BipA"/>
    <property type="match status" value="1"/>
</dbReference>
<dbReference type="PANTHER" id="PTHR42908:SF8">
    <property type="entry name" value="TR-TYPE G DOMAIN-CONTAINING PROTEIN"/>
    <property type="match status" value="1"/>
</dbReference>
<dbReference type="PANTHER" id="PTHR42908">
    <property type="entry name" value="TRANSLATION ELONGATION FACTOR-RELATED"/>
    <property type="match status" value="1"/>
</dbReference>
<dbReference type="Pfam" id="PF21018">
    <property type="entry name" value="BipA_C"/>
    <property type="match status" value="1"/>
</dbReference>
<dbReference type="Pfam" id="PF00679">
    <property type="entry name" value="EFG_C"/>
    <property type="match status" value="1"/>
</dbReference>
<dbReference type="Pfam" id="PF00009">
    <property type="entry name" value="GTP_EFTU"/>
    <property type="match status" value="1"/>
</dbReference>
<dbReference type="Pfam" id="PF03144">
    <property type="entry name" value="GTP_EFTU_D2"/>
    <property type="match status" value="1"/>
</dbReference>
<dbReference type="PRINTS" id="PR00315">
    <property type="entry name" value="ELONGATNFCT"/>
</dbReference>
<dbReference type="SUPFAM" id="SSF54980">
    <property type="entry name" value="EF-G C-terminal domain-like"/>
    <property type="match status" value="2"/>
</dbReference>
<dbReference type="SUPFAM" id="SSF52540">
    <property type="entry name" value="P-loop containing nucleoside triphosphate hydrolases"/>
    <property type="match status" value="1"/>
</dbReference>
<dbReference type="SUPFAM" id="SSF50447">
    <property type="entry name" value="Translation proteins"/>
    <property type="match status" value="1"/>
</dbReference>
<dbReference type="PROSITE" id="PS00301">
    <property type="entry name" value="G_TR_1"/>
    <property type="match status" value="1"/>
</dbReference>
<dbReference type="PROSITE" id="PS51722">
    <property type="entry name" value="G_TR_2"/>
    <property type="match status" value="1"/>
</dbReference>
<feature type="chain" id="PRO_0000091552" description="Large ribosomal subunit assembly factor BipA">
    <location>
        <begin position="1"/>
        <end position="607"/>
    </location>
</feature>
<feature type="domain" description="tr-type G" evidence="1">
    <location>
        <begin position="3"/>
        <end position="198"/>
    </location>
</feature>
<feature type="binding site" evidence="1">
    <location>
        <begin position="15"/>
        <end position="20"/>
    </location>
    <ligand>
        <name>GTP</name>
        <dbReference type="ChEBI" id="CHEBI:37565"/>
    </ligand>
</feature>
<feature type="binding site" evidence="1">
    <location>
        <begin position="128"/>
        <end position="131"/>
    </location>
    <ligand>
        <name>GTP</name>
        <dbReference type="ChEBI" id="CHEBI:37565"/>
    </ligand>
</feature>
<protein>
    <recommendedName>
        <fullName evidence="1">Large ribosomal subunit assembly factor BipA</fullName>
        <ecNumber evidence="1">3.6.5.-</ecNumber>
    </recommendedName>
    <alternativeName>
        <fullName evidence="4">50S ribosomal subunit assembly factor BipA</fullName>
    </alternativeName>
    <alternativeName>
        <fullName evidence="1">GTP-binding protein BipA</fullName>
    </alternativeName>
</protein>
<organism>
    <name type="scientific">Escherichia coli O6:H1 (strain CFT073 / ATCC 700928 / UPEC)</name>
    <dbReference type="NCBI Taxonomy" id="199310"/>
    <lineage>
        <taxon>Bacteria</taxon>
        <taxon>Pseudomonadati</taxon>
        <taxon>Pseudomonadota</taxon>
        <taxon>Gammaproteobacteria</taxon>
        <taxon>Enterobacterales</taxon>
        <taxon>Enterobacteriaceae</taxon>
        <taxon>Escherichia</taxon>
    </lineage>
</organism>
<gene>
    <name evidence="1 3" type="primary">bipA</name>
    <name type="synonym">typA</name>
    <name type="ordered locus">c4820</name>
</gene>